<name>YOAB_ECOL6</name>
<sequence>MTIVRIDAEARWSDVVIHNNTLYYTGVPENLDADAFEQTANTLAQIDAVLEKQGSNKSSILDATIFLADKNDFAAMNKAWDAWVVAGHAPVRCTVQAGLMNPKYKVEIKIVAAV</sequence>
<reference key="1">
    <citation type="journal article" date="2002" name="Proc. Natl. Acad. Sci. U.S.A.">
        <title>Extensive mosaic structure revealed by the complete genome sequence of uropathogenic Escherichia coli.</title>
        <authorList>
            <person name="Welch R.A."/>
            <person name="Burland V."/>
            <person name="Plunkett G. III"/>
            <person name="Redford P."/>
            <person name="Roesch P."/>
            <person name="Rasko D."/>
            <person name="Buckles E.L."/>
            <person name="Liou S.-R."/>
            <person name="Boutin A."/>
            <person name="Hackett J."/>
            <person name="Stroud D."/>
            <person name="Mayhew G.F."/>
            <person name="Rose D.J."/>
            <person name="Zhou S."/>
            <person name="Schwartz D.C."/>
            <person name="Perna N.T."/>
            <person name="Mobley H.L.T."/>
            <person name="Donnenberg M.S."/>
            <person name="Blattner F.R."/>
        </authorList>
    </citation>
    <scope>NUCLEOTIDE SEQUENCE [LARGE SCALE GENOMIC DNA]</scope>
    <source>
        <strain>CFT073 / ATCC 700928 / UPEC</strain>
    </source>
</reference>
<proteinExistence type="inferred from homology"/>
<comment type="similarity">
    <text evidence="1">Belongs to the RutC family.</text>
</comment>
<comment type="sequence caution" evidence="1">
    <conflict type="erroneous initiation">
        <sequence resource="EMBL-CDS" id="AAN80672"/>
    </conflict>
</comment>
<gene>
    <name type="primary">yoaB</name>
    <name type="ordered locus">c2213</name>
</gene>
<accession>P0AEB8</accession>
<accession>P76258</accession>
<feature type="chain" id="PRO_0000170327" description="RutC family protein YoaB">
    <location>
        <begin position="1"/>
        <end position="114"/>
    </location>
</feature>
<protein>
    <recommendedName>
        <fullName>RutC family protein YoaB</fullName>
    </recommendedName>
</protein>
<dbReference type="EMBL" id="AE014075">
    <property type="protein sequence ID" value="AAN80672.1"/>
    <property type="status" value="ALT_INIT"/>
    <property type="molecule type" value="Genomic_DNA"/>
</dbReference>
<dbReference type="RefSeq" id="WP_001295493.1">
    <property type="nucleotide sequence ID" value="NZ_CP051263.1"/>
</dbReference>
<dbReference type="SMR" id="P0AEB8"/>
<dbReference type="STRING" id="199310.c2213"/>
<dbReference type="KEGG" id="ecc:c2213"/>
<dbReference type="eggNOG" id="COG0251">
    <property type="taxonomic scope" value="Bacteria"/>
</dbReference>
<dbReference type="HOGENOM" id="CLU_100715_6_1_6"/>
<dbReference type="Proteomes" id="UP000001410">
    <property type="component" value="Chromosome"/>
</dbReference>
<dbReference type="CDD" id="cd06150">
    <property type="entry name" value="YjgF_YER057c_UK114_like_2"/>
    <property type="match status" value="1"/>
</dbReference>
<dbReference type="FunFam" id="3.30.1330.40:FF:000002">
    <property type="entry name" value="Endoribonuclease L-PSP family protein"/>
    <property type="match status" value="1"/>
</dbReference>
<dbReference type="Gene3D" id="3.30.1330.40">
    <property type="entry name" value="RutC-like"/>
    <property type="match status" value="1"/>
</dbReference>
<dbReference type="InterPro" id="IPR019897">
    <property type="entry name" value="RidA_CS"/>
</dbReference>
<dbReference type="InterPro" id="IPR035959">
    <property type="entry name" value="RutC-like_sf"/>
</dbReference>
<dbReference type="InterPro" id="IPR006175">
    <property type="entry name" value="YjgF/YER057c/UK114"/>
</dbReference>
<dbReference type="InterPro" id="IPR035709">
    <property type="entry name" value="YoaB-like"/>
</dbReference>
<dbReference type="PANTHER" id="PTHR47328">
    <property type="match status" value="1"/>
</dbReference>
<dbReference type="PANTHER" id="PTHR47328:SF1">
    <property type="entry name" value="RUTC FAMILY PROTEIN YOAB"/>
    <property type="match status" value="1"/>
</dbReference>
<dbReference type="Pfam" id="PF01042">
    <property type="entry name" value="Ribonuc_L-PSP"/>
    <property type="match status" value="1"/>
</dbReference>
<dbReference type="SUPFAM" id="SSF55298">
    <property type="entry name" value="YjgF-like"/>
    <property type="match status" value="1"/>
</dbReference>
<dbReference type="PROSITE" id="PS01094">
    <property type="entry name" value="UPF0076"/>
    <property type="match status" value="1"/>
</dbReference>
<evidence type="ECO:0000305" key="1"/>
<keyword id="KW-1185">Reference proteome</keyword>
<organism>
    <name type="scientific">Escherichia coli O6:H1 (strain CFT073 / ATCC 700928 / UPEC)</name>
    <dbReference type="NCBI Taxonomy" id="199310"/>
    <lineage>
        <taxon>Bacteria</taxon>
        <taxon>Pseudomonadati</taxon>
        <taxon>Pseudomonadota</taxon>
        <taxon>Gammaproteobacteria</taxon>
        <taxon>Enterobacterales</taxon>
        <taxon>Enterobacteriaceae</taxon>
        <taxon>Escherichia</taxon>
    </lineage>
</organism>